<name>METE_NITEU</name>
<organism>
    <name type="scientific">Nitrosomonas europaea (strain ATCC 19718 / CIP 103999 / KCTC 2705 / NBRC 14298)</name>
    <dbReference type="NCBI Taxonomy" id="228410"/>
    <lineage>
        <taxon>Bacteria</taxon>
        <taxon>Pseudomonadati</taxon>
        <taxon>Pseudomonadota</taxon>
        <taxon>Betaproteobacteria</taxon>
        <taxon>Nitrosomonadales</taxon>
        <taxon>Nitrosomonadaceae</taxon>
        <taxon>Nitrosomonas</taxon>
    </lineage>
</organism>
<reference key="1">
    <citation type="journal article" date="2003" name="J. Bacteriol.">
        <title>Complete genome sequence of the ammonia-oxidizing bacterium and obligate chemolithoautotroph Nitrosomonas europaea.</title>
        <authorList>
            <person name="Chain P."/>
            <person name="Lamerdin J.E."/>
            <person name="Larimer F.W."/>
            <person name="Regala W."/>
            <person name="Lao V."/>
            <person name="Land M.L."/>
            <person name="Hauser L."/>
            <person name="Hooper A.B."/>
            <person name="Klotz M.G."/>
            <person name="Norton J."/>
            <person name="Sayavedra-Soto L.A."/>
            <person name="Arciero D.M."/>
            <person name="Hommes N.G."/>
            <person name="Whittaker M.M."/>
            <person name="Arp D.J."/>
        </authorList>
    </citation>
    <scope>NUCLEOTIDE SEQUENCE [LARGE SCALE GENOMIC DNA]</scope>
    <source>
        <strain>ATCC 19718 / CIP 103999 / KCTC 2705 / NBRC 14298</strain>
    </source>
</reference>
<keyword id="KW-0028">Amino-acid biosynthesis</keyword>
<keyword id="KW-0479">Metal-binding</keyword>
<keyword id="KW-0486">Methionine biosynthesis</keyword>
<keyword id="KW-0489">Methyltransferase</keyword>
<keyword id="KW-1185">Reference proteome</keyword>
<keyword id="KW-0677">Repeat</keyword>
<keyword id="KW-0808">Transferase</keyword>
<keyword id="KW-0862">Zinc</keyword>
<comment type="function">
    <text evidence="1">Catalyzes the transfer of a methyl group from 5-methyltetrahydrofolate to homocysteine resulting in methionine formation.</text>
</comment>
<comment type="catalytic activity">
    <reaction evidence="1">
        <text>5-methyltetrahydropteroyltri-L-glutamate + L-homocysteine = tetrahydropteroyltri-L-glutamate + L-methionine</text>
        <dbReference type="Rhea" id="RHEA:21196"/>
        <dbReference type="ChEBI" id="CHEBI:57844"/>
        <dbReference type="ChEBI" id="CHEBI:58140"/>
        <dbReference type="ChEBI" id="CHEBI:58199"/>
        <dbReference type="ChEBI" id="CHEBI:58207"/>
        <dbReference type="EC" id="2.1.1.14"/>
    </reaction>
</comment>
<comment type="cofactor">
    <cofactor evidence="1">
        <name>Zn(2+)</name>
        <dbReference type="ChEBI" id="CHEBI:29105"/>
    </cofactor>
    <text evidence="1">Binds 1 zinc ion per subunit.</text>
</comment>
<comment type="pathway">
    <text evidence="1">Amino-acid biosynthesis; L-methionine biosynthesis via de novo pathway; L-methionine from L-homocysteine (MetE route): step 1/1.</text>
</comment>
<comment type="similarity">
    <text evidence="1">Belongs to the vitamin-B12 independent methionine synthase family.</text>
</comment>
<dbReference type="EC" id="2.1.1.14" evidence="1"/>
<dbReference type="EMBL" id="AL954747">
    <property type="protein sequence ID" value="CAD85347.1"/>
    <property type="molecule type" value="Genomic_DNA"/>
</dbReference>
<dbReference type="RefSeq" id="WP_011112004.1">
    <property type="nucleotide sequence ID" value="NC_004757.1"/>
</dbReference>
<dbReference type="SMR" id="Q82UP6"/>
<dbReference type="STRING" id="228410.NE1436"/>
<dbReference type="GeneID" id="87104610"/>
<dbReference type="KEGG" id="neu:NE1436"/>
<dbReference type="eggNOG" id="COG0620">
    <property type="taxonomic scope" value="Bacteria"/>
</dbReference>
<dbReference type="HOGENOM" id="CLU_013175_0_0_4"/>
<dbReference type="OrthoDB" id="244285at2"/>
<dbReference type="PhylomeDB" id="Q82UP6"/>
<dbReference type="UniPathway" id="UPA00051">
    <property type="reaction ID" value="UER00082"/>
</dbReference>
<dbReference type="Proteomes" id="UP000001416">
    <property type="component" value="Chromosome"/>
</dbReference>
<dbReference type="GO" id="GO:0003871">
    <property type="term" value="F:5-methyltetrahydropteroyltriglutamate-homocysteine S-methyltransferase activity"/>
    <property type="evidence" value="ECO:0007669"/>
    <property type="project" value="UniProtKB-UniRule"/>
</dbReference>
<dbReference type="GO" id="GO:0008270">
    <property type="term" value="F:zinc ion binding"/>
    <property type="evidence" value="ECO:0007669"/>
    <property type="project" value="InterPro"/>
</dbReference>
<dbReference type="GO" id="GO:0009086">
    <property type="term" value="P:methionine biosynthetic process"/>
    <property type="evidence" value="ECO:0007669"/>
    <property type="project" value="UniProtKB-UniRule"/>
</dbReference>
<dbReference type="GO" id="GO:0032259">
    <property type="term" value="P:methylation"/>
    <property type="evidence" value="ECO:0007669"/>
    <property type="project" value="UniProtKB-KW"/>
</dbReference>
<dbReference type="CDD" id="cd03311">
    <property type="entry name" value="CIMS_C_terminal_like"/>
    <property type="match status" value="1"/>
</dbReference>
<dbReference type="CDD" id="cd03312">
    <property type="entry name" value="CIMS_N_terminal_like"/>
    <property type="match status" value="1"/>
</dbReference>
<dbReference type="FunFam" id="3.20.20.210:FF:000002">
    <property type="entry name" value="5-methyltetrahydropteroyltriglutamate--homocysteine methyltransferase"/>
    <property type="match status" value="1"/>
</dbReference>
<dbReference type="FunFam" id="3.20.20.210:FF:000003">
    <property type="entry name" value="5-methyltetrahydropteroyltriglutamate--homocysteine methyltransferase"/>
    <property type="match status" value="1"/>
</dbReference>
<dbReference type="Gene3D" id="3.20.20.210">
    <property type="match status" value="2"/>
</dbReference>
<dbReference type="HAMAP" id="MF_00172">
    <property type="entry name" value="Meth_synth"/>
    <property type="match status" value="1"/>
</dbReference>
<dbReference type="InterPro" id="IPR013215">
    <property type="entry name" value="Cbl-indep_Met_Synth_N"/>
</dbReference>
<dbReference type="InterPro" id="IPR006276">
    <property type="entry name" value="Cobalamin-indep_Met_synthase"/>
</dbReference>
<dbReference type="InterPro" id="IPR002629">
    <property type="entry name" value="Met_Synth_C/arc"/>
</dbReference>
<dbReference type="InterPro" id="IPR038071">
    <property type="entry name" value="UROD/MetE-like_sf"/>
</dbReference>
<dbReference type="NCBIfam" id="TIGR01371">
    <property type="entry name" value="met_syn_B12ind"/>
    <property type="match status" value="1"/>
</dbReference>
<dbReference type="NCBIfam" id="NF003556">
    <property type="entry name" value="PRK05222.1"/>
    <property type="match status" value="1"/>
</dbReference>
<dbReference type="PANTHER" id="PTHR30519">
    <property type="entry name" value="5-METHYLTETRAHYDROPTEROYLTRIGLUTAMATE--HOMOCYSTEINE METHYLTRANSFERASE"/>
    <property type="match status" value="1"/>
</dbReference>
<dbReference type="Pfam" id="PF08267">
    <property type="entry name" value="Meth_synt_1"/>
    <property type="match status" value="1"/>
</dbReference>
<dbReference type="Pfam" id="PF01717">
    <property type="entry name" value="Meth_synt_2"/>
    <property type="match status" value="1"/>
</dbReference>
<dbReference type="PIRSF" id="PIRSF000382">
    <property type="entry name" value="MeTrfase_B12_ind"/>
    <property type="match status" value="1"/>
</dbReference>
<dbReference type="SUPFAM" id="SSF51726">
    <property type="entry name" value="UROD/MetE-like"/>
    <property type="match status" value="2"/>
</dbReference>
<protein>
    <recommendedName>
        <fullName evidence="1">5-methyltetrahydropteroyltriglutamate--homocysteine methyltransferase</fullName>
        <ecNumber evidence="1">2.1.1.14</ecNumber>
    </recommendedName>
    <alternativeName>
        <fullName evidence="1">Cobalamin-independent methionine synthase</fullName>
    </alternativeName>
    <alternativeName>
        <fullName evidence="1">Methionine synthase, vitamin-B12 independent isozyme</fullName>
    </alternativeName>
</protein>
<sequence length="758" mass="86052">MRTLTHNLGFPRIGAQRELKKALETYWKGQNDVDQLLATARAIRTGNWLLQQKAGIDLIPVGDFSLYDHILDMTTLLGAIPHRFGNTGDKISPDLYFAMARGTADQPAMEMTKWFNTNYHYIVPEFDDTTQFRLASDRLFQEIEDAKALGITAKAVLIGPLTYLYLGKEVTPGFQRLDLLPRLLPVYREILQKIASLGVEWVQIDEPILSLDLEQPWRDSFAEAYHTLHDGSCRLLLTTYFGTVDHHLTLLKNLPVDGLHIDVSSAPEQLESFLTEDFSGKTLSLGCIDGRNIWRADLSQKLETLSQAASRFAGELWIAPSCSLLHCPVDLALETKLEPEIKNWLAFSAQKLEEMTTLGRGLNQGRESVEAILTASDEARRSRTESSRIHNPIVHQRVDNLTERDSQRNHPFATRKHLQQQRFNLPLLPTTTIGSFPQTATIRQARAAFRKNELSHLEYLSAMRAEIREMIRKQEEIGLDVLVHGEPERNDMVEYFGEQLWGYAFTENGWVQSYGSRCVKPPILYGDVYRPEAMTVEWIKYAQSQTGKPVKGMLTGPVTMLMWSFVRDDQPRSTTALQLALAIRDEVADLENAGIGMIQIDEPAFREGLPLRKQDWKSYLDWAVKAFRVASSGVKDETQIHTHMCYSEFHDILPAIAELDADVITIETSRSRMELLDAFVKFSYPNEIGPGVYDIHSPRVPDASEMFELLKKASRYIDPTLLWVNPDCGLKTRNWPETQTALQKMVDCAKTLRSALQA</sequence>
<gene>
    <name evidence="1" type="primary">metE</name>
    <name type="ordered locus">NE1436</name>
</gene>
<evidence type="ECO:0000255" key="1">
    <source>
        <dbReference type="HAMAP-Rule" id="MF_00172"/>
    </source>
</evidence>
<feature type="chain" id="PRO_0000098645" description="5-methyltetrahydropteroyltriglutamate--homocysteine methyltransferase">
    <location>
        <begin position="1"/>
        <end position="758"/>
    </location>
</feature>
<feature type="active site" description="Proton donor" evidence="1">
    <location>
        <position position="696"/>
    </location>
</feature>
<feature type="binding site" evidence="1">
    <location>
        <begin position="17"/>
        <end position="20"/>
    </location>
    <ligand>
        <name>5-methyltetrahydropteroyltri-L-glutamate</name>
        <dbReference type="ChEBI" id="CHEBI:58207"/>
    </ligand>
</feature>
<feature type="binding site" evidence="1">
    <location>
        <position position="113"/>
    </location>
    <ligand>
        <name>5-methyltetrahydropteroyltri-L-glutamate</name>
        <dbReference type="ChEBI" id="CHEBI:58207"/>
    </ligand>
</feature>
<feature type="binding site" evidence="1">
    <location>
        <begin position="433"/>
        <end position="435"/>
    </location>
    <ligand>
        <name>L-homocysteine</name>
        <dbReference type="ChEBI" id="CHEBI:58199"/>
    </ligand>
</feature>
<feature type="binding site" evidence="1">
    <location>
        <begin position="433"/>
        <end position="435"/>
    </location>
    <ligand>
        <name>L-methionine</name>
        <dbReference type="ChEBI" id="CHEBI:57844"/>
    </ligand>
</feature>
<feature type="binding site" evidence="1">
    <location>
        <position position="486"/>
    </location>
    <ligand>
        <name>L-homocysteine</name>
        <dbReference type="ChEBI" id="CHEBI:58199"/>
    </ligand>
</feature>
<feature type="binding site" evidence="1">
    <location>
        <position position="486"/>
    </location>
    <ligand>
        <name>L-methionine</name>
        <dbReference type="ChEBI" id="CHEBI:57844"/>
    </ligand>
</feature>
<feature type="binding site" evidence="1">
    <location>
        <begin position="517"/>
        <end position="518"/>
    </location>
    <ligand>
        <name>5-methyltetrahydropteroyltri-L-glutamate</name>
        <dbReference type="ChEBI" id="CHEBI:58207"/>
    </ligand>
</feature>
<feature type="binding site" evidence="1">
    <location>
        <position position="563"/>
    </location>
    <ligand>
        <name>5-methyltetrahydropteroyltri-L-glutamate</name>
        <dbReference type="ChEBI" id="CHEBI:58207"/>
    </ligand>
</feature>
<feature type="binding site" evidence="1">
    <location>
        <position position="601"/>
    </location>
    <ligand>
        <name>L-homocysteine</name>
        <dbReference type="ChEBI" id="CHEBI:58199"/>
    </ligand>
</feature>
<feature type="binding site" evidence="1">
    <location>
        <position position="601"/>
    </location>
    <ligand>
        <name>L-methionine</name>
        <dbReference type="ChEBI" id="CHEBI:57844"/>
    </ligand>
</feature>
<feature type="binding site" evidence="1">
    <location>
        <position position="607"/>
    </location>
    <ligand>
        <name>5-methyltetrahydropteroyltri-L-glutamate</name>
        <dbReference type="ChEBI" id="CHEBI:58207"/>
    </ligand>
</feature>
<feature type="binding site" evidence="1">
    <location>
        <position position="643"/>
    </location>
    <ligand>
        <name>Zn(2+)</name>
        <dbReference type="ChEBI" id="CHEBI:29105"/>
        <note>catalytic</note>
    </ligand>
</feature>
<feature type="binding site" evidence="1">
    <location>
        <position position="645"/>
    </location>
    <ligand>
        <name>Zn(2+)</name>
        <dbReference type="ChEBI" id="CHEBI:29105"/>
        <note>catalytic</note>
    </ligand>
</feature>
<feature type="binding site" evidence="1">
    <location>
        <position position="667"/>
    </location>
    <ligand>
        <name>Zn(2+)</name>
        <dbReference type="ChEBI" id="CHEBI:29105"/>
        <note>catalytic</note>
    </ligand>
</feature>
<feature type="binding site" evidence="1">
    <location>
        <position position="728"/>
    </location>
    <ligand>
        <name>Zn(2+)</name>
        <dbReference type="ChEBI" id="CHEBI:29105"/>
        <note>catalytic</note>
    </ligand>
</feature>
<proteinExistence type="inferred from homology"/>
<accession>Q82UP6</accession>